<dbReference type="EMBL" id="AM422018">
    <property type="protein sequence ID" value="CAM11921.1"/>
    <property type="molecule type" value="Genomic_DNA"/>
</dbReference>
<dbReference type="SMR" id="B1VAE8"/>
<dbReference type="STRING" id="59748.PA0587"/>
<dbReference type="KEGG" id="pal:PA0587"/>
<dbReference type="eggNOG" id="COG0087">
    <property type="taxonomic scope" value="Bacteria"/>
</dbReference>
<dbReference type="Proteomes" id="UP000008323">
    <property type="component" value="Chromosome"/>
</dbReference>
<dbReference type="GO" id="GO:0022625">
    <property type="term" value="C:cytosolic large ribosomal subunit"/>
    <property type="evidence" value="ECO:0007669"/>
    <property type="project" value="TreeGrafter"/>
</dbReference>
<dbReference type="GO" id="GO:0019843">
    <property type="term" value="F:rRNA binding"/>
    <property type="evidence" value="ECO:0007669"/>
    <property type="project" value="UniProtKB-UniRule"/>
</dbReference>
<dbReference type="GO" id="GO:0003735">
    <property type="term" value="F:structural constituent of ribosome"/>
    <property type="evidence" value="ECO:0007669"/>
    <property type="project" value="InterPro"/>
</dbReference>
<dbReference type="GO" id="GO:0006412">
    <property type="term" value="P:translation"/>
    <property type="evidence" value="ECO:0007669"/>
    <property type="project" value="UniProtKB-UniRule"/>
</dbReference>
<dbReference type="FunFam" id="2.40.30.10:FF:000004">
    <property type="entry name" value="50S ribosomal protein L3"/>
    <property type="match status" value="1"/>
</dbReference>
<dbReference type="FunFam" id="3.30.160.810:FF:000001">
    <property type="entry name" value="50S ribosomal protein L3"/>
    <property type="match status" value="1"/>
</dbReference>
<dbReference type="Gene3D" id="3.30.160.810">
    <property type="match status" value="1"/>
</dbReference>
<dbReference type="Gene3D" id="2.40.30.10">
    <property type="entry name" value="Translation factors"/>
    <property type="match status" value="1"/>
</dbReference>
<dbReference type="HAMAP" id="MF_01325_B">
    <property type="entry name" value="Ribosomal_uL3_B"/>
    <property type="match status" value="1"/>
</dbReference>
<dbReference type="InterPro" id="IPR000597">
    <property type="entry name" value="Ribosomal_uL3"/>
</dbReference>
<dbReference type="InterPro" id="IPR019927">
    <property type="entry name" value="Ribosomal_uL3_bac/org-type"/>
</dbReference>
<dbReference type="InterPro" id="IPR019926">
    <property type="entry name" value="Ribosomal_uL3_CS"/>
</dbReference>
<dbReference type="InterPro" id="IPR009000">
    <property type="entry name" value="Transl_B-barrel_sf"/>
</dbReference>
<dbReference type="NCBIfam" id="TIGR03625">
    <property type="entry name" value="L3_bact"/>
    <property type="match status" value="1"/>
</dbReference>
<dbReference type="PANTHER" id="PTHR11229">
    <property type="entry name" value="50S RIBOSOMAL PROTEIN L3"/>
    <property type="match status" value="1"/>
</dbReference>
<dbReference type="PANTHER" id="PTHR11229:SF16">
    <property type="entry name" value="LARGE RIBOSOMAL SUBUNIT PROTEIN UL3C"/>
    <property type="match status" value="1"/>
</dbReference>
<dbReference type="Pfam" id="PF00297">
    <property type="entry name" value="Ribosomal_L3"/>
    <property type="match status" value="1"/>
</dbReference>
<dbReference type="SUPFAM" id="SSF50447">
    <property type="entry name" value="Translation proteins"/>
    <property type="match status" value="1"/>
</dbReference>
<dbReference type="PROSITE" id="PS00474">
    <property type="entry name" value="RIBOSOMAL_L3"/>
    <property type="match status" value="1"/>
</dbReference>
<reference key="1">
    <citation type="journal article" date="2008" name="J. Bacteriol.">
        <title>Comparative genome analysis of 'Candidatus Phytoplasma australiense' (subgroup tuf-Australia I; rp-A) and 'Ca. Phytoplasma asteris' strains OY-M and AY-WB.</title>
        <authorList>
            <person name="Tran-Nguyen L.T."/>
            <person name="Kube M."/>
            <person name="Schneider B."/>
            <person name="Reinhardt R."/>
            <person name="Gibb K.S."/>
        </authorList>
    </citation>
    <scope>NUCLEOTIDE SEQUENCE [LARGE SCALE GENOMIC DNA]</scope>
</reference>
<feature type="chain" id="PRO_1000141898" description="Large ribosomal subunit protein uL3">
    <location>
        <begin position="1"/>
        <end position="221"/>
    </location>
</feature>
<feature type="region of interest" description="Disordered" evidence="2">
    <location>
        <begin position="131"/>
        <end position="165"/>
    </location>
</feature>
<accession>B1VAE8</accession>
<gene>
    <name evidence="1" type="primary">rplC</name>
    <name type="ordered locus">PA0587</name>
</gene>
<proteinExistence type="inferred from homology"/>
<keyword id="KW-1185">Reference proteome</keyword>
<keyword id="KW-0687">Ribonucleoprotein</keyword>
<keyword id="KW-0689">Ribosomal protein</keyword>
<keyword id="KW-0694">RNA-binding</keyword>
<keyword id="KW-0699">rRNA-binding</keyword>
<name>RL3_PHYAS</name>
<organism>
    <name type="scientific">Phytoplasma australiense</name>
    <dbReference type="NCBI Taxonomy" id="59748"/>
    <lineage>
        <taxon>Bacteria</taxon>
        <taxon>Bacillati</taxon>
        <taxon>Mycoplasmatota</taxon>
        <taxon>Mollicutes</taxon>
        <taxon>Acholeplasmatales</taxon>
        <taxon>Acholeplasmataceae</taxon>
        <taxon>Candidatus Phytoplasma</taxon>
        <taxon>16SrXII (Stolbur group)</taxon>
    </lineage>
</organism>
<comment type="function">
    <text evidence="1">One of the primary rRNA binding proteins, it binds directly near the 3'-end of the 23S rRNA, where it nucleates assembly of the 50S subunit.</text>
</comment>
<comment type="subunit">
    <text evidence="1">Part of the 50S ribosomal subunit. Forms a cluster with proteins L14 and L19.</text>
</comment>
<comment type="similarity">
    <text evidence="1">Belongs to the universal ribosomal protein uL3 family.</text>
</comment>
<evidence type="ECO:0000255" key="1">
    <source>
        <dbReference type="HAMAP-Rule" id="MF_01325"/>
    </source>
</evidence>
<evidence type="ECO:0000256" key="2">
    <source>
        <dbReference type="SAM" id="MobiDB-lite"/>
    </source>
</evidence>
<evidence type="ECO:0000305" key="3"/>
<protein>
    <recommendedName>
        <fullName evidence="1">Large ribosomal subunit protein uL3</fullName>
    </recommendedName>
    <alternativeName>
        <fullName evidence="3">50S ribosomal protein L3</fullName>
    </alternativeName>
</protein>
<sequence>MAQGILGKKIGMTQMFNEQGEIIPITIVDVSANVVLQQKNVAIDGYNATQIGFDDKKDKITTKPMLGHFKKAKTTPKRFIKEIIFKKENISSLSALAVGDQVSCDLFQVGDLVDVTGTSKGKGFAGVIKRHNQSRGPETHGSRHHRRPGSMGPIKGKIKGKKLPGQMGHQTVTIQNLVLFSVDNQKNLFLIKGSVPGPNKGFVVIKSAVKKLSKEQANAKI</sequence>